<keyword id="KW-0007">Acetylation</keyword>
<keyword id="KW-0053">Apoptosis</keyword>
<keyword id="KW-1003">Cell membrane</keyword>
<keyword id="KW-0963">Cytoplasm</keyword>
<keyword id="KW-1015">Disulfide bond</keyword>
<keyword id="KW-0449">Lipoprotein</keyword>
<keyword id="KW-0472">Membrane</keyword>
<keyword id="KW-0636">Prenylation</keyword>
<keyword id="KW-0676">Redox-active center</keyword>
<keyword id="KW-1185">Reference proteome</keyword>
<evidence type="ECO:0000250" key="1"/>
<evidence type="ECO:0000250" key="2">
    <source>
        <dbReference type="UniProtKB" id="Q9BRT3"/>
    </source>
</evidence>
<evidence type="ECO:0000256" key="3">
    <source>
        <dbReference type="SAM" id="MobiDB-lite"/>
    </source>
</evidence>
<evidence type="ECO:0000305" key="4"/>
<accession>Q148C8</accession>
<feature type="initiator methionine" description="Removed" evidence="2">
    <location>
        <position position="1"/>
    </location>
</feature>
<feature type="chain" id="PRO_0000265098" description="Migration and invasion enhancer 1">
    <location>
        <begin position="2"/>
        <end position="112"/>
    </location>
</feature>
<feature type="propeptide" id="PRO_0000396007" description="Removed in mature form" evidence="1">
    <location>
        <begin position="113"/>
        <end position="115"/>
    </location>
</feature>
<feature type="region of interest" description="Disordered" evidence="3">
    <location>
        <begin position="1"/>
        <end position="22"/>
    </location>
</feature>
<feature type="compositionally biased region" description="Polar residues" evidence="3">
    <location>
        <begin position="1"/>
        <end position="10"/>
    </location>
</feature>
<feature type="modified residue" description="N-acetylserine" evidence="2">
    <location>
        <position position="2"/>
    </location>
</feature>
<feature type="lipid moiety-binding region" description="S-geranylgeranyl cysteine" evidence="1">
    <location>
        <position position="112"/>
    </location>
</feature>
<feature type="disulfide bond" description="Redox-active" evidence="1">
    <location>
        <begin position="30"/>
        <end position="33"/>
    </location>
</feature>
<dbReference type="EMBL" id="BC118463">
    <property type="protein sequence ID" value="AAI18464.1"/>
    <property type="molecule type" value="mRNA"/>
</dbReference>
<dbReference type="RefSeq" id="NP_001068689.1">
    <property type="nucleotide sequence ID" value="NM_001075221.2"/>
</dbReference>
<dbReference type="SMR" id="Q148C8"/>
<dbReference type="FunCoup" id="Q148C8">
    <property type="interactions" value="464"/>
</dbReference>
<dbReference type="STRING" id="9913.ENSBTAP00000029060"/>
<dbReference type="PaxDb" id="9913-ENSBTAP00000029060"/>
<dbReference type="Ensembl" id="ENSBTAT00000029060.3">
    <property type="protein sequence ID" value="ENSBTAP00000029060.2"/>
    <property type="gene ID" value="ENSBTAG00000021802.4"/>
</dbReference>
<dbReference type="GeneID" id="505710"/>
<dbReference type="KEGG" id="bta:505710"/>
<dbReference type="CTD" id="84299"/>
<dbReference type="VEuPathDB" id="HostDB:ENSBTAG00000021802"/>
<dbReference type="VGNC" id="VGNC:31468">
    <property type="gene designation" value="MIEN1"/>
</dbReference>
<dbReference type="eggNOG" id="ENOG502S3GR">
    <property type="taxonomic scope" value="Eukaryota"/>
</dbReference>
<dbReference type="GeneTree" id="ENSGT00390000010440"/>
<dbReference type="HOGENOM" id="CLU_068510_4_0_1"/>
<dbReference type="InParanoid" id="Q148C8"/>
<dbReference type="OMA" id="AAPIKDC"/>
<dbReference type="OrthoDB" id="5962009at2759"/>
<dbReference type="TreeFam" id="TF326627"/>
<dbReference type="Proteomes" id="UP000009136">
    <property type="component" value="Chromosome 19"/>
</dbReference>
<dbReference type="Bgee" id="ENSBTAG00000021802">
    <property type="expression patterns" value="Expressed in pons and 109 other cell types or tissues"/>
</dbReference>
<dbReference type="GO" id="GO:0009898">
    <property type="term" value="C:cytoplasmic side of plasma membrane"/>
    <property type="evidence" value="ECO:0000250"/>
    <property type="project" value="UniProtKB"/>
</dbReference>
<dbReference type="GO" id="GO:0005829">
    <property type="term" value="C:cytosol"/>
    <property type="evidence" value="ECO:0000250"/>
    <property type="project" value="UniProtKB"/>
</dbReference>
<dbReference type="GO" id="GO:0006915">
    <property type="term" value="P:apoptotic process"/>
    <property type="evidence" value="ECO:0007669"/>
    <property type="project" value="UniProtKB-KW"/>
</dbReference>
<dbReference type="GO" id="GO:0043066">
    <property type="term" value="P:negative regulation of apoptotic process"/>
    <property type="evidence" value="ECO:0000250"/>
    <property type="project" value="UniProtKB"/>
</dbReference>
<dbReference type="GO" id="GO:0030335">
    <property type="term" value="P:positive regulation of cell migration"/>
    <property type="evidence" value="ECO:0000250"/>
    <property type="project" value="UniProtKB"/>
</dbReference>
<dbReference type="GO" id="GO:0051491">
    <property type="term" value="P:positive regulation of filopodium assembly"/>
    <property type="evidence" value="ECO:0000250"/>
    <property type="project" value="UniProtKB"/>
</dbReference>
<dbReference type="FunFam" id="3.40.30.10:FF:000131">
    <property type="entry name" value="migration and invasion enhancer 1"/>
    <property type="match status" value="1"/>
</dbReference>
<dbReference type="Gene3D" id="3.40.30.10">
    <property type="entry name" value="Glutaredoxin"/>
    <property type="match status" value="1"/>
</dbReference>
<dbReference type="InterPro" id="IPR011893">
    <property type="entry name" value="Selenoprotein_Rdx-typ"/>
</dbReference>
<dbReference type="InterPro" id="IPR051441">
    <property type="entry name" value="SelW_related"/>
</dbReference>
<dbReference type="InterPro" id="IPR036249">
    <property type="entry name" value="Thioredoxin-like_sf"/>
</dbReference>
<dbReference type="NCBIfam" id="TIGR02174">
    <property type="entry name" value="CXXU_selWTH"/>
    <property type="match status" value="1"/>
</dbReference>
<dbReference type="PANTHER" id="PTHR15124:SF27">
    <property type="entry name" value="MIGRATION AND INVASION ENHANCER 1"/>
    <property type="match status" value="1"/>
</dbReference>
<dbReference type="PANTHER" id="PTHR15124">
    <property type="entry name" value="SELENOPROTEIN W"/>
    <property type="match status" value="1"/>
</dbReference>
<dbReference type="Pfam" id="PF10262">
    <property type="entry name" value="Rdx"/>
    <property type="match status" value="1"/>
</dbReference>
<dbReference type="SUPFAM" id="SSF52833">
    <property type="entry name" value="Thioredoxin-like"/>
    <property type="match status" value="1"/>
</dbReference>
<name>MIEN1_BOVIN</name>
<gene>
    <name type="primary">MIEN1</name>
    <name type="synonym">RDX12</name>
</gene>
<sequence>MSGDTGTTSVAPPPGETEPGHGVRIVVEYCEPCGFEATYLELASAVKEQYPGIEIESRLGGTGAFEIEINGQLVFSKLENGGFPYEKDLIEAIRRASNGEPLEKITNSRPPCVIL</sequence>
<comment type="function">
    <text evidence="1">Increases cell migration by inducing filopodia formation at the leading edge of migrating cells. Plays a role in regulation of apoptosis, possibly through control of CASP3. May be involved in a redox-related process (By similarity).</text>
</comment>
<comment type="subunit">
    <text evidence="1">Interacts with GPX1.</text>
</comment>
<comment type="subcellular location">
    <subcellularLocation>
        <location evidence="1">Cytoplasm</location>
        <location evidence="1">Cytosol</location>
    </subcellularLocation>
    <subcellularLocation>
        <location evidence="1">Cell membrane</location>
        <topology evidence="1">Lipid-anchor</topology>
        <orientation evidence="1">Cytoplasmic side</orientation>
    </subcellularLocation>
    <text evidence="1">Concentrates at the leading edge of migrating cells. Localizes outside membrane raft regions (By similarity).</text>
</comment>
<comment type="PTM">
    <text evidence="1">Isoprenylation facilitates association with the plasma membrane and enhances the migratory phenotype of cells by inducing increased filopodia formation.</text>
</comment>
<comment type="similarity">
    <text evidence="4">Belongs to the SelWTH family.</text>
</comment>
<organism>
    <name type="scientific">Bos taurus</name>
    <name type="common">Bovine</name>
    <dbReference type="NCBI Taxonomy" id="9913"/>
    <lineage>
        <taxon>Eukaryota</taxon>
        <taxon>Metazoa</taxon>
        <taxon>Chordata</taxon>
        <taxon>Craniata</taxon>
        <taxon>Vertebrata</taxon>
        <taxon>Euteleostomi</taxon>
        <taxon>Mammalia</taxon>
        <taxon>Eutheria</taxon>
        <taxon>Laurasiatheria</taxon>
        <taxon>Artiodactyla</taxon>
        <taxon>Ruminantia</taxon>
        <taxon>Pecora</taxon>
        <taxon>Bovidae</taxon>
        <taxon>Bovinae</taxon>
        <taxon>Bos</taxon>
    </lineage>
</organism>
<protein>
    <recommendedName>
        <fullName>Migration and invasion enhancer 1</fullName>
    </recommendedName>
</protein>
<reference key="1">
    <citation type="submission" date="2006-06" db="EMBL/GenBank/DDBJ databases">
        <authorList>
            <consortium name="NIH - Mammalian Gene Collection (MGC) project"/>
        </authorList>
    </citation>
    <scope>NUCLEOTIDE SEQUENCE [LARGE SCALE MRNA]</scope>
    <source>
        <strain>Hereford</strain>
        <tissue>Fetal pons</tissue>
    </source>
</reference>
<proteinExistence type="inferred from homology"/>